<comment type="function">
    <text evidence="3">Catalyzes the cleavage of N-acetylneuraminic acid (sialic acid) to form pyruvate and N-acetylmannosamine via a Schiff base intermediate. It prevents sialic acids from being recycled and returning to the cell surface. Involved in the N-glycolylneuraminic acid (Neu5Gc) degradation pathway.</text>
</comment>
<comment type="catalytic activity">
    <reaction evidence="3">
        <text>aceneuramate = aldehydo-N-acetyl-D-mannosamine + pyruvate</text>
        <dbReference type="Rhea" id="RHEA:23296"/>
        <dbReference type="ChEBI" id="CHEBI:15361"/>
        <dbReference type="ChEBI" id="CHEBI:17122"/>
        <dbReference type="ChEBI" id="CHEBI:173083"/>
        <dbReference type="EC" id="4.1.3.3"/>
    </reaction>
</comment>
<comment type="pathway">
    <text evidence="3">Amino-sugar metabolism; N-acetylneuraminate degradation.</text>
</comment>
<comment type="subunit">
    <text evidence="3">Homotetramer.</text>
</comment>
<comment type="subcellular location">
    <subcellularLocation>
        <location evidence="1">Cytoplasm</location>
    </subcellularLocation>
</comment>
<comment type="similarity">
    <text evidence="4">Belongs to the DapA family. NanA subfamily.</text>
</comment>
<organism>
    <name type="scientific">Danio rerio</name>
    <name type="common">Zebrafish</name>
    <name type="synonym">Brachydanio rerio</name>
    <dbReference type="NCBI Taxonomy" id="7955"/>
    <lineage>
        <taxon>Eukaryota</taxon>
        <taxon>Metazoa</taxon>
        <taxon>Chordata</taxon>
        <taxon>Craniata</taxon>
        <taxon>Vertebrata</taxon>
        <taxon>Euteleostomi</taxon>
        <taxon>Actinopterygii</taxon>
        <taxon>Neopterygii</taxon>
        <taxon>Teleostei</taxon>
        <taxon>Ostariophysi</taxon>
        <taxon>Cypriniformes</taxon>
        <taxon>Danionidae</taxon>
        <taxon>Danioninae</taxon>
        <taxon>Danio</taxon>
    </lineage>
</organism>
<name>NPL_DANRE</name>
<gene>
    <name evidence="3" type="primary">npl</name>
    <name type="ORF">zgc:76930</name>
</gene>
<reference key="1">
    <citation type="submission" date="2004-02" db="EMBL/GenBank/DDBJ databases">
        <authorList>
            <consortium name="NIH - Zebrafish Gene Collection (ZGC) project"/>
        </authorList>
    </citation>
    <scope>NUCLEOTIDE SEQUENCE [LARGE SCALE MRNA]</scope>
    <source>
        <tissue>Kidney</tissue>
    </source>
</reference>
<evidence type="ECO:0000250" key="1"/>
<evidence type="ECO:0000250" key="2">
    <source>
        <dbReference type="UniProtKB" id="P0A6L4"/>
    </source>
</evidence>
<evidence type="ECO:0000250" key="3">
    <source>
        <dbReference type="UniProtKB" id="Q9BXD5"/>
    </source>
</evidence>
<evidence type="ECO:0000305" key="4"/>
<dbReference type="EC" id="4.1.3.3" evidence="3"/>
<dbReference type="EMBL" id="BC066486">
    <property type="protein sequence ID" value="AAH66486.1"/>
    <property type="molecule type" value="mRNA"/>
</dbReference>
<dbReference type="SMR" id="Q6NYR8"/>
<dbReference type="FunCoup" id="Q6NYR8">
    <property type="interactions" value="87"/>
</dbReference>
<dbReference type="STRING" id="7955.ENSDARP00000148018"/>
<dbReference type="PaxDb" id="7955-ENSDARP00000027094"/>
<dbReference type="AGR" id="ZFIN:ZDB-GENE-030131-926"/>
<dbReference type="ZFIN" id="ZDB-GENE-030131-926">
    <property type="gene designation" value="npl"/>
</dbReference>
<dbReference type="eggNOG" id="ENOG502QQA3">
    <property type="taxonomic scope" value="Eukaryota"/>
</dbReference>
<dbReference type="InParanoid" id="Q6NYR8"/>
<dbReference type="PhylomeDB" id="Q6NYR8"/>
<dbReference type="Reactome" id="R-DRE-4085001">
    <property type="pathway name" value="Sialic acid metabolism"/>
</dbReference>
<dbReference type="UniPathway" id="UPA00629"/>
<dbReference type="PRO" id="PR:Q6NYR8"/>
<dbReference type="Proteomes" id="UP000000437">
    <property type="component" value="Unplaced"/>
</dbReference>
<dbReference type="GO" id="GO:0005737">
    <property type="term" value="C:cytoplasm"/>
    <property type="evidence" value="ECO:0007669"/>
    <property type="project" value="UniProtKB-SubCell"/>
</dbReference>
<dbReference type="GO" id="GO:0008747">
    <property type="term" value="F:N-acetylneuraminate lyase activity"/>
    <property type="evidence" value="ECO:0000250"/>
    <property type="project" value="UniProtKB"/>
</dbReference>
<dbReference type="GO" id="GO:0019262">
    <property type="term" value="P:N-acetylneuraminate catabolic process"/>
    <property type="evidence" value="ECO:0000315"/>
    <property type="project" value="ZFIN"/>
</dbReference>
<dbReference type="FunFam" id="3.20.20.70:FF:000511">
    <property type="entry name" value="N-acetylneuraminate lyase"/>
    <property type="match status" value="1"/>
</dbReference>
<dbReference type="Gene3D" id="3.20.20.70">
    <property type="entry name" value="Aldolase class I"/>
    <property type="match status" value="1"/>
</dbReference>
<dbReference type="InterPro" id="IPR013785">
    <property type="entry name" value="Aldolase_TIM"/>
</dbReference>
<dbReference type="InterPro" id="IPR002220">
    <property type="entry name" value="DapA-like"/>
</dbReference>
<dbReference type="InterPro" id="IPR020624">
    <property type="entry name" value="Schiff_base-form_aldolases_CS"/>
</dbReference>
<dbReference type="PANTHER" id="PTHR12128">
    <property type="entry name" value="DIHYDRODIPICOLINATE SYNTHASE"/>
    <property type="match status" value="1"/>
</dbReference>
<dbReference type="PANTHER" id="PTHR12128:SF21">
    <property type="entry name" value="N-ACETYLNEURAMINATE LYASE"/>
    <property type="match status" value="1"/>
</dbReference>
<dbReference type="Pfam" id="PF00701">
    <property type="entry name" value="DHDPS"/>
    <property type="match status" value="1"/>
</dbReference>
<dbReference type="PIRSF" id="PIRSF001365">
    <property type="entry name" value="DHDPS"/>
    <property type="match status" value="1"/>
</dbReference>
<dbReference type="PRINTS" id="PR00146">
    <property type="entry name" value="DHPICSNTHASE"/>
</dbReference>
<dbReference type="SMART" id="SM01130">
    <property type="entry name" value="DHDPS"/>
    <property type="match status" value="1"/>
</dbReference>
<dbReference type="SUPFAM" id="SSF51569">
    <property type="entry name" value="Aldolase"/>
    <property type="match status" value="1"/>
</dbReference>
<dbReference type="PROSITE" id="PS00665">
    <property type="entry name" value="DHDPS_1"/>
    <property type="match status" value="1"/>
</dbReference>
<keyword id="KW-0119">Carbohydrate metabolism</keyword>
<keyword id="KW-0963">Cytoplasm</keyword>
<keyword id="KW-0456">Lyase</keyword>
<keyword id="KW-1185">Reference proteome</keyword>
<keyword id="KW-0704">Schiff base</keyword>
<protein>
    <recommendedName>
        <fullName evidence="3">N-acetylneuraminate lyase</fullName>
        <shortName>NALase</shortName>
        <ecNumber evidence="3">4.1.3.3</ecNumber>
    </recommendedName>
    <alternativeName>
        <fullName>N-acetylneuraminate pyruvate-lyase</fullName>
    </alternativeName>
    <alternativeName>
        <fullName>N-acetylneuraminic acid aldolase</fullName>
    </alternativeName>
    <alternativeName>
        <fullName>Sialate lyase</fullName>
    </alternativeName>
    <alternativeName>
        <fullName>Sialate-pyruvate lyase</fullName>
    </alternativeName>
    <alternativeName>
        <fullName>Sialic acid aldolase</fullName>
    </alternativeName>
    <alternativeName>
        <fullName>Sialic acid lyase</fullName>
    </alternativeName>
</protein>
<feature type="chain" id="PRO_0000273358" description="N-acetylneuraminate lyase">
    <location>
        <begin position="1"/>
        <end position="307"/>
    </location>
</feature>
<feature type="active site" description="Proton donor" evidence="2">
    <location>
        <position position="143"/>
    </location>
</feature>
<feature type="active site" description="Schiff-base intermediate with substrate" evidence="2">
    <location>
        <position position="173"/>
    </location>
</feature>
<feature type="binding site" evidence="2">
    <location>
        <position position="51"/>
    </location>
    <ligand>
        <name>aceneuramate</name>
        <dbReference type="ChEBI" id="CHEBI:173083"/>
    </ligand>
</feature>
<feature type="binding site" evidence="2">
    <location>
        <position position="52"/>
    </location>
    <ligand>
        <name>aceneuramate</name>
        <dbReference type="ChEBI" id="CHEBI:173083"/>
    </ligand>
</feature>
<feature type="binding site" evidence="2">
    <location>
        <position position="175"/>
    </location>
    <ligand>
        <name>aceneuramate</name>
        <dbReference type="ChEBI" id="CHEBI:173083"/>
    </ligand>
</feature>
<feature type="binding site" evidence="2">
    <location>
        <position position="199"/>
    </location>
    <ligand>
        <name>aceneuramate</name>
        <dbReference type="ChEBI" id="CHEBI:173083"/>
    </ligand>
</feature>
<feature type="binding site" evidence="2">
    <location>
        <position position="201"/>
    </location>
    <ligand>
        <name>aceneuramate</name>
        <dbReference type="ChEBI" id="CHEBI:173083"/>
    </ligand>
</feature>
<feature type="binding site" evidence="2">
    <location>
        <position position="202"/>
    </location>
    <ligand>
        <name>aceneuramate</name>
        <dbReference type="ChEBI" id="CHEBI:173083"/>
    </ligand>
</feature>
<feature type="binding site" evidence="2">
    <location>
        <position position="218"/>
    </location>
    <ligand>
        <name>aceneuramate</name>
        <dbReference type="ChEBI" id="CHEBI:173083"/>
    </ligand>
</feature>
<sequence>MSQRVKKLTGLVAATFTPLTAEGEINLSVIAAYVDYLIEKQNVKSVFVNGTTGEGCSLTVDERKHLAAAWCQHGKGKLEQLIVHVGCMSIKDSQELARHAASIGADGISVISPSYFKPINADALRLFIKEVSASAPDLPMYYYHLPGMTGVALEAADVLNGIEREIPSFQGVKYSGTDLRDLGQCVCYSQSRDWSVLYGVDEQLLGALVLGVHGAVGSTYNYLGHIVNQMLSAFNNGNHTQTRDLQFGFMEVITFARTLGFDVSVNKQVMSEVSGLPMGPPRLPLLPCPVSKAQAIAQKIHNFTQGL</sequence>
<proteinExistence type="evidence at transcript level"/>
<accession>Q6NYR8</accession>